<proteinExistence type="evidence at protein level"/>
<accession>Q99JR5</accession>
<accession>Q9EQT9</accession>
<dbReference type="EMBL" id="AB047402">
    <property type="protein sequence ID" value="BAB20596.1"/>
    <property type="status" value="ALT_SEQ"/>
    <property type="molecule type" value="mRNA"/>
</dbReference>
<dbReference type="EMBL" id="AB050626">
    <property type="protein sequence ID" value="BAC76038.1"/>
    <property type="molecule type" value="mRNA"/>
</dbReference>
<dbReference type="EMBL" id="BC005738">
    <property type="protein sequence ID" value="AAH05738.1"/>
    <property type="molecule type" value="mRNA"/>
</dbReference>
<dbReference type="EMBL" id="BC018539">
    <property type="protein sequence ID" value="AAH18539.1"/>
    <property type="molecule type" value="mRNA"/>
</dbReference>
<dbReference type="CCDS" id="CCDS18708.2"/>
<dbReference type="RefSeq" id="NP_001161805.1">
    <property type="nucleotide sequence ID" value="NM_001168333.1"/>
</dbReference>
<dbReference type="RefSeq" id="NP_075965.2">
    <property type="nucleotide sequence ID" value="NM_023476.3"/>
</dbReference>
<dbReference type="SMR" id="Q99JR5"/>
<dbReference type="BioGRID" id="220489">
    <property type="interactions" value="3"/>
</dbReference>
<dbReference type="FunCoup" id="Q99JR5">
    <property type="interactions" value="206"/>
</dbReference>
<dbReference type="STRING" id="10090.ENSMUSP00000101620"/>
<dbReference type="MEROPS" id="C01.975"/>
<dbReference type="GlyCosmos" id="Q99JR5">
    <property type="glycosylation" value="2 sites, No reported glycans"/>
</dbReference>
<dbReference type="GlyGen" id="Q99JR5">
    <property type="glycosylation" value="5 sites"/>
</dbReference>
<dbReference type="PhosphoSitePlus" id="Q99JR5"/>
<dbReference type="SwissPalm" id="Q99JR5"/>
<dbReference type="jPOST" id="Q99JR5"/>
<dbReference type="PaxDb" id="10090-ENSMUSP00000101620"/>
<dbReference type="PeptideAtlas" id="Q99JR5"/>
<dbReference type="ProteomicsDB" id="259103"/>
<dbReference type="Pumba" id="Q99JR5"/>
<dbReference type="Antibodypedia" id="31121">
    <property type="antibodies" value="191 antibodies from 26 providers"/>
</dbReference>
<dbReference type="DNASU" id="94242"/>
<dbReference type="Ensembl" id="ENSMUST00000030560.9">
    <property type="protein sequence ID" value="ENSMUSP00000030560.3"/>
    <property type="gene ID" value="ENSMUSG00000028776.15"/>
</dbReference>
<dbReference type="Ensembl" id="ENSMUST00000105998.8">
    <property type="protein sequence ID" value="ENSMUSP00000101620.2"/>
    <property type="gene ID" value="ENSMUSG00000028776.15"/>
</dbReference>
<dbReference type="Ensembl" id="ENSMUST00000105999.9">
    <property type="protein sequence ID" value="ENSMUSP00000101621.3"/>
    <property type="gene ID" value="ENSMUSG00000028776.15"/>
</dbReference>
<dbReference type="GeneID" id="94242"/>
<dbReference type="KEGG" id="mmu:94242"/>
<dbReference type="UCSC" id="uc008uyz.2">
    <property type="organism name" value="mouse"/>
</dbReference>
<dbReference type="AGR" id="MGI:2137617"/>
<dbReference type="CTD" id="64129"/>
<dbReference type="MGI" id="MGI:2137617">
    <property type="gene designation" value="Tinagl1"/>
</dbReference>
<dbReference type="VEuPathDB" id="HostDB:ENSMUSG00000028776"/>
<dbReference type="eggNOG" id="KOG1544">
    <property type="taxonomic scope" value="Eukaryota"/>
</dbReference>
<dbReference type="GeneTree" id="ENSGT00940000160023"/>
<dbReference type="InParanoid" id="Q99JR5"/>
<dbReference type="OMA" id="AEIYHSG"/>
<dbReference type="OrthoDB" id="190265at2759"/>
<dbReference type="PhylomeDB" id="Q99JR5"/>
<dbReference type="TreeFam" id="TF313765"/>
<dbReference type="BioGRID-ORCS" id="94242">
    <property type="hits" value="3 hits in 81 CRISPR screens"/>
</dbReference>
<dbReference type="ChiTaRS" id="Tinagl1">
    <property type="organism name" value="mouse"/>
</dbReference>
<dbReference type="PRO" id="PR:Q99JR5"/>
<dbReference type="Proteomes" id="UP000000589">
    <property type="component" value="Chromosome 4"/>
</dbReference>
<dbReference type="RNAct" id="Q99JR5">
    <property type="molecule type" value="protein"/>
</dbReference>
<dbReference type="Bgee" id="ENSMUSG00000028776">
    <property type="expression patterns" value="Expressed in placenta labyrinth and 199 other cell types or tissues"/>
</dbReference>
<dbReference type="ExpressionAtlas" id="Q99JR5">
    <property type="expression patterns" value="baseline and differential"/>
</dbReference>
<dbReference type="GO" id="GO:0062023">
    <property type="term" value="C:collagen-containing extracellular matrix"/>
    <property type="evidence" value="ECO:0007005"/>
    <property type="project" value="BHF-UCL"/>
</dbReference>
<dbReference type="GO" id="GO:0005737">
    <property type="term" value="C:cytoplasm"/>
    <property type="evidence" value="ECO:0000314"/>
    <property type="project" value="MGI"/>
</dbReference>
<dbReference type="GO" id="GO:0005615">
    <property type="term" value="C:extracellular space"/>
    <property type="evidence" value="ECO:0007005"/>
    <property type="project" value="BHF-UCL"/>
</dbReference>
<dbReference type="GO" id="GO:0008234">
    <property type="term" value="F:cysteine-type peptidase activity"/>
    <property type="evidence" value="ECO:0007669"/>
    <property type="project" value="InterPro"/>
</dbReference>
<dbReference type="GO" id="GO:0043236">
    <property type="term" value="F:laminin binding"/>
    <property type="evidence" value="ECO:0000353"/>
    <property type="project" value="MGI"/>
</dbReference>
<dbReference type="GO" id="GO:0006508">
    <property type="term" value="P:proteolysis"/>
    <property type="evidence" value="ECO:0007669"/>
    <property type="project" value="InterPro"/>
</dbReference>
<dbReference type="CDD" id="cd02620">
    <property type="entry name" value="Peptidase_C1A_CathepsinB"/>
    <property type="match status" value="1"/>
</dbReference>
<dbReference type="FunFam" id="3.90.70.10:FF:000037">
    <property type="entry name" value="Tubulointerstitial nephritis antigen-like 1"/>
    <property type="match status" value="1"/>
</dbReference>
<dbReference type="Gene3D" id="3.90.70.10">
    <property type="entry name" value="Cysteine proteinases"/>
    <property type="match status" value="1"/>
</dbReference>
<dbReference type="InterPro" id="IPR038765">
    <property type="entry name" value="Papain-like_cys_pep_sf"/>
</dbReference>
<dbReference type="InterPro" id="IPR025660">
    <property type="entry name" value="Pept_his_AS"/>
</dbReference>
<dbReference type="InterPro" id="IPR013128">
    <property type="entry name" value="Peptidase_C1A"/>
</dbReference>
<dbReference type="InterPro" id="IPR000668">
    <property type="entry name" value="Peptidase_C1A_C"/>
</dbReference>
<dbReference type="InterPro" id="IPR001212">
    <property type="entry name" value="Somatomedin_B_dom"/>
</dbReference>
<dbReference type="PANTHER" id="PTHR12411">
    <property type="entry name" value="CYSTEINE PROTEASE FAMILY C1-RELATED"/>
    <property type="match status" value="1"/>
</dbReference>
<dbReference type="Pfam" id="PF00112">
    <property type="entry name" value="Peptidase_C1"/>
    <property type="match status" value="1"/>
</dbReference>
<dbReference type="SMART" id="SM00645">
    <property type="entry name" value="Pept_C1"/>
    <property type="match status" value="1"/>
</dbReference>
<dbReference type="SUPFAM" id="SSF54001">
    <property type="entry name" value="Cysteine proteinases"/>
    <property type="match status" value="1"/>
</dbReference>
<dbReference type="PROSITE" id="PS00524">
    <property type="entry name" value="SMB_1"/>
    <property type="match status" value="1"/>
</dbReference>
<dbReference type="PROSITE" id="PS50958">
    <property type="entry name" value="SMB_2"/>
    <property type="match status" value="1"/>
</dbReference>
<dbReference type="PROSITE" id="PS00639">
    <property type="entry name" value="THIOL_PROTEASE_HIS"/>
    <property type="match status" value="1"/>
</dbReference>
<protein>
    <recommendedName>
        <fullName>Tubulointerstitial nephritis antigen-like</fullName>
    </recommendedName>
    <alternativeName>
        <fullName>Adrenocortical zonation factor 1</fullName>
        <shortName>AZ-1</shortName>
    </alternativeName>
    <alternativeName>
        <fullName>Androgen-regulated gene 1 protein</fullName>
    </alternativeName>
    <alternativeName>
        <fullName>Tubulointerstitial nephritis antigen-related protein</fullName>
        <shortName>TARP</shortName>
    </alternativeName>
</protein>
<organism>
    <name type="scientific">Mus musculus</name>
    <name type="common">Mouse</name>
    <dbReference type="NCBI Taxonomy" id="10090"/>
    <lineage>
        <taxon>Eukaryota</taxon>
        <taxon>Metazoa</taxon>
        <taxon>Chordata</taxon>
        <taxon>Craniata</taxon>
        <taxon>Vertebrata</taxon>
        <taxon>Euteleostomi</taxon>
        <taxon>Mammalia</taxon>
        <taxon>Eutheria</taxon>
        <taxon>Euarchontoglires</taxon>
        <taxon>Glires</taxon>
        <taxon>Rodentia</taxon>
        <taxon>Myomorpha</taxon>
        <taxon>Muroidea</taxon>
        <taxon>Muridae</taxon>
        <taxon>Murinae</taxon>
        <taxon>Mus</taxon>
        <taxon>Mus</taxon>
    </lineage>
</organism>
<evidence type="ECO:0000250" key="1"/>
<evidence type="ECO:0000255" key="2"/>
<evidence type="ECO:0000255" key="3">
    <source>
        <dbReference type="PROSITE-ProRule" id="PRU00350"/>
    </source>
</evidence>
<evidence type="ECO:0000255" key="4">
    <source>
        <dbReference type="PROSITE-ProRule" id="PRU10089"/>
    </source>
</evidence>
<evidence type="ECO:0000269" key="5">
    <source>
    </source>
</evidence>
<evidence type="ECO:0000269" key="6">
    <source>
    </source>
</evidence>
<evidence type="ECO:0000305" key="7"/>
<name>TINAL_MOUSE</name>
<comment type="function">
    <text evidence="6">May be implicated in the adrenocortical zonation and in mechanisms for repressing the CYP11B1 gene expression in adrenocortical cells. This is a non catalytic peptidase C1 family protein.</text>
</comment>
<comment type="subcellular location">
    <subcellularLocation>
        <location>Secreted</location>
    </subcellularLocation>
</comment>
<comment type="tissue specificity">
    <text evidence="5 6">Highly expressed in kidney, heart and adrenocortical cells of adrenal glands. Moderately expressed in spleen and liver. Also found in prostate, seminal vesicle, epididymis and testis in male reproductive organs. In adrenal glands is found in the outer cortical regions corresponding to the zona glomerulosa (zG) and the undifferentiated cell zone (zU) (at protein level).</text>
</comment>
<comment type="induction">
    <text evidence="5">Down-regulated in prostate after castration.</text>
</comment>
<comment type="PTM">
    <text evidence="1">Glycosylated.</text>
</comment>
<comment type="similarity">
    <text evidence="4">Belongs to the peptidase C1 family.</text>
</comment>
<comment type="sequence caution" evidence="7">
    <conflict type="frameshift">
        <sequence resource="EMBL-CDS" id="BAB20596"/>
    </conflict>
</comment>
<reference key="1">
    <citation type="journal article" date="2001" name="J. Steroid Biochem. Mol. Biol.">
        <title>Isolation of an androgen-inducible novel lipocalin gene, Arg1, from androgen-dependent mouse mammary Shionogi carcinoma cells.</title>
        <authorList>
            <person name="Kobayashi M."/>
            <person name="Kinouchi T."/>
            <person name="Hakamata Y."/>
            <person name="Kamiakito T."/>
            <person name="Kuriki K."/>
            <person name="Suzuki K."/>
            <person name="Tokue A."/>
            <person name="Fukayama M."/>
            <person name="Tanaka A."/>
        </authorList>
    </citation>
    <scope>NUCLEOTIDE SEQUENCE [MRNA]</scope>
    <scope>INDUCTION</scope>
    <scope>TISSUE SPECIFICITY</scope>
</reference>
<reference key="2">
    <citation type="journal article" date="2003" name="J. Biol. Chem.">
        <title>An inverse correlation between expression of a preprocathepsin B-related protein with cysteine-rich sequences and steroid 11beta - hydroxylase in adrenocortical cells.</title>
        <authorList>
            <person name="Mukai K."/>
            <person name="Mitani F."/>
            <person name="Nagasawa H."/>
            <person name="Suzuki R."/>
            <person name="Suzuki T."/>
            <person name="Suematsu M."/>
            <person name="Ishimura Y."/>
        </authorList>
    </citation>
    <scope>NUCLEOTIDE SEQUENCE [MRNA]</scope>
    <scope>TISSUE SPECIFICITY</scope>
    <scope>FUNCTION</scope>
    <source>
        <tissue>Adrenal cortex</tissue>
    </source>
</reference>
<reference key="3">
    <citation type="journal article" date="2004" name="Genome Res.">
        <title>The status, quality, and expansion of the NIH full-length cDNA project: the Mammalian Gene Collection (MGC).</title>
        <authorList>
            <consortium name="The MGC Project Team"/>
        </authorList>
    </citation>
    <scope>NUCLEOTIDE SEQUENCE [LARGE SCALE MRNA]</scope>
    <source>
        <strain>Czech II</strain>
        <strain>FVB/N</strain>
        <tissue>Mammary tumor</tissue>
    </source>
</reference>
<sequence length="466" mass="52665">MWGCWLGLLLLLLAGQAALEARRSRWRRELAPGLHLRGIRDAGGRYCQEQDMCCRGRADECALPYLGATCYCDLFCNRTVSDCCPDFWDFCLGIPPPFPPVQGCMHGGRIYPVFGTYWDNCNRCTCHEGGHWECDQEPCLVDPDMIKAINRGNYGWQAGNHSAFWGMTLDEGIRYRLGTIRPSSTVMNMNEIYTVLGQGEVLPTAFEASEKWPNLIHEPLDQGNCAGSWAFSTAAVASDRVSIHSLGHMTPILSPQNLLSCDTHHQQGCRGGRLDGAWWFLRRRGVVSDNCYPFSGREQNEASPTPRCMMHSRAMGRGKRQATSRCPNGQVDSNDIYQVTPAYRLGSDEKEIMKELMENGPVQALMEVHEDFFLYQRGIYSHTPVSQGRPEQYRRHGTHSVKITGWGEETLPDGRTIKYWTAANSWGPWWGERGHFRIVRGTNECDIETFVLGVWGRVGMEDMGHH</sequence>
<gene>
    <name type="primary">Tinagl1</name>
    <name type="synonym">Arg1</name>
    <name type="synonym">Lcn7</name>
    <name type="synonym">Tinagl</name>
</gene>
<feature type="signal peptide" evidence="2">
    <location>
        <begin position="1"/>
        <end position="21"/>
    </location>
</feature>
<feature type="chain" id="PRO_0000026483" description="Tubulointerstitial nephritis antigen-like">
    <location>
        <begin position="22"/>
        <end position="466"/>
    </location>
</feature>
<feature type="domain" description="SMB" evidence="3">
    <location>
        <begin position="49"/>
        <end position="96"/>
    </location>
</feature>
<feature type="glycosylation site" description="N-linked (GlcNAc...) asparagine" evidence="2">
    <location>
        <position position="77"/>
    </location>
</feature>
<feature type="glycosylation site" description="N-linked (GlcNAc...) asparagine" evidence="2">
    <location>
        <position position="160"/>
    </location>
</feature>
<feature type="disulfide bond" description="Alternate" evidence="3">
    <location>
        <begin position="53"/>
        <end position="72"/>
    </location>
</feature>
<feature type="disulfide bond" description="Alternate" evidence="3">
    <location>
        <begin position="70"/>
        <end position="84"/>
    </location>
</feature>
<feature type="disulfide bond" evidence="3">
    <location>
        <begin position="70"/>
        <end position="72"/>
    </location>
</feature>
<feature type="disulfide bond" evidence="3">
    <location>
        <begin position="76"/>
        <end position="83"/>
    </location>
</feature>
<feature type="disulfide bond" evidence="3">
    <location>
        <begin position="84"/>
        <end position="91"/>
    </location>
</feature>
<keyword id="KW-1015">Disulfide bond</keyword>
<keyword id="KW-0325">Glycoprotein</keyword>
<keyword id="KW-1185">Reference proteome</keyword>
<keyword id="KW-0964">Secreted</keyword>
<keyword id="KW-0732">Signal</keyword>